<dbReference type="EMBL" id="CP000736">
    <property type="protein sequence ID" value="ABR52949.1"/>
    <property type="molecule type" value="Genomic_DNA"/>
</dbReference>
<dbReference type="SMR" id="A6U3D1"/>
<dbReference type="KEGG" id="sah:SaurJH1_2120"/>
<dbReference type="HOGENOM" id="CLU_061534_1_1_9"/>
<dbReference type="GO" id="GO:0005737">
    <property type="term" value="C:cytoplasm"/>
    <property type="evidence" value="ECO:0007669"/>
    <property type="project" value="UniProtKB-SubCell"/>
</dbReference>
<dbReference type="GO" id="GO:0003677">
    <property type="term" value="F:DNA binding"/>
    <property type="evidence" value="ECO:0007669"/>
    <property type="project" value="UniProtKB-UniRule"/>
</dbReference>
<dbReference type="GO" id="GO:0003700">
    <property type="term" value="F:DNA-binding transcription factor activity"/>
    <property type="evidence" value="ECO:0007669"/>
    <property type="project" value="UniProtKB-UniRule"/>
</dbReference>
<dbReference type="GO" id="GO:0045892">
    <property type="term" value="P:negative regulation of DNA-templated transcription"/>
    <property type="evidence" value="ECO:0007669"/>
    <property type="project" value="InterPro"/>
</dbReference>
<dbReference type="GO" id="GO:0051775">
    <property type="term" value="P:response to redox state"/>
    <property type="evidence" value="ECO:0007669"/>
    <property type="project" value="InterPro"/>
</dbReference>
<dbReference type="Gene3D" id="3.40.50.720">
    <property type="entry name" value="NAD(P)-binding Rossmann-like Domain"/>
    <property type="match status" value="1"/>
</dbReference>
<dbReference type="Gene3D" id="1.10.10.10">
    <property type="entry name" value="Winged helix-like DNA-binding domain superfamily/Winged helix DNA-binding domain"/>
    <property type="match status" value="1"/>
</dbReference>
<dbReference type="HAMAP" id="MF_01131">
    <property type="entry name" value="Rex"/>
    <property type="match status" value="1"/>
</dbReference>
<dbReference type="InterPro" id="IPR003781">
    <property type="entry name" value="CoA-bd"/>
</dbReference>
<dbReference type="InterPro" id="IPR036291">
    <property type="entry name" value="NAD(P)-bd_dom_sf"/>
</dbReference>
<dbReference type="InterPro" id="IPR009718">
    <property type="entry name" value="Rex_DNA-bd_C_dom"/>
</dbReference>
<dbReference type="InterPro" id="IPR022876">
    <property type="entry name" value="Tscrpt_rep_Rex"/>
</dbReference>
<dbReference type="InterPro" id="IPR036388">
    <property type="entry name" value="WH-like_DNA-bd_sf"/>
</dbReference>
<dbReference type="InterPro" id="IPR036390">
    <property type="entry name" value="WH_DNA-bd_sf"/>
</dbReference>
<dbReference type="NCBIfam" id="NF003989">
    <property type="entry name" value="PRK05472.1-3"/>
    <property type="match status" value="1"/>
</dbReference>
<dbReference type="NCBIfam" id="NF003991">
    <property type="entry name" value="PRK05472.1-5"/>
    <property type="match status" value="1"/>
</dbReference>
<dbReference type="NCBIfam" id="NF003994">
    <property type="entry name" value="PRK05472.2-3"/>
    <property type="match status" value="1"/>
</dbReference>
<dbReference type="NCBIfam" id="NF003995">
    <property type="entry name" value="PRK05472.2-4"/>
    <property type="match status" value="1"/>
</dbReference>
<dbReference type="NCBIfam" id="NF003996">
    <property type="entry name" value="PRK05472.2-5"/>
    <property type="match status" value="1"/>
</dbReference>
<dbReference type="PANTHER" id="PTHR35786">
    <property type="entry name" value="REDOX-SENSING TRANSCRIPTIONAL REPRESSOR REX"/>
    <property type="match status" value="1"/>
</dbReference>
<dbReference type="PANTHER" id="PTHR35786:SF1">
    <property type="entry name" value="REDOX-SENSING TRANSCRIPTIONAL REPRESSOR REX 1"/>
    <property type="match status" value="1"/>
</dbReference>
<dbReference type="Pfam" id="PF02629">
    <property type="entry name" value="CoA_binding"/>
    <property type="match status" value="1"/>
</dbReference>
<dbReference type="Pfam" id="PF06971">
    <property type="entry name" value="Put_DNA-bind_N"/>
    <property type="match status" value="1"/>
</dbReference>
<dbReference type="SMART" id="SM00881">
    <property type="entry name" value="CoA_binding"/>
    <property type="match status" value="1"/>
</dbReference>
<dbReference type="SUPFAM" id="SSF51735">
    <property type="entry name" value="NAD(P)-binding Rossmann-fold domains"/>
    <property type="match status" value="1"/>
</dbReference>
<dbReference type="SUPFAM" id="SSF46785">
    <property type="entry name" value="Winged helix' DNA-binding domain"/>
    <property type="match status" value="1"/>
</dbReference>
<feature type="chain" id="PRO_1000085027" description="Redox-sensing transcriptional repressor Rex">
    <location>
        <begin position="1"/>
        <end position="211"/>
    </location>
</feature>
<feature type="DNA-binding region" description="H-T-H motif" evidence="1">
    <location>
        <begin position="17"/>
        <end position="56"/>
    </location>
</feature>
<feature type="binding site" evidence="1">
    <location>
        <begin position="91"/>
        <end position="96"/>
    </location>
    <ligand>
        <name>NAD(+)</name>
        <dbReference type="ChEBI" id="CHEBI:57540"/>
    </ligand>
</feature>
<organism>
    <name type="scientific">Staphylococcus aureus (strain JH1)</name>
    <dbReference type="NCBI Taxonomy" id="359787"/>
    <lineage>
        <taxon>Bacteria</taxon>
        <taxon>Bacillati</taxon>
        <taxon>Bacillota</taxon>
        <taxon>Bacilli</taxon>
        <taxon>Bacillales</taxon>
        <taxon>Staphylococcaceae</taxon>
        <taxon>Staphylococcus</taxon>
    </lineage>
</organism>
<comment type="function">
    <text evidence="1">Modulates transcription in response to changes in cellular NADH/NAD(+) redox state.</text>
</comment>
<comment type="subunit">
    <text evidence="1">Homodimer.</text>
</comment>
<comment type="subcellular location">
    <subcellularLocation>
        <location evidence="1">Cytoplasm</location>
    </subcellularLocation>
</comment>
<comment type="similarity">
    <text evidence="1">Belongs to the transcriptional regulatory Rex family.</text>
</comment>
<name>REX_STAA2</name>
<keyword id="KW-0963">Cytoplasm</keyword>
<keyword id="KW-0238">DNA-binding</keyword>
<keyword id="KW-0520">NAD</keyword>
<keyword id="KW-0678">Repressor</keyword>
<keyword id="KW-0804">Transcription</keyword>
<keyword id="KW-0805">Transcription regulation</keyword>
<proteinExistence type="inferred from homology"/>
<protein>
    <recommendedName>
        <fullName evidence="1">Redox-sensing transcriptional repressor Rex</fullName>
    </recommendedName>
</protein>
<gene>
    <name evidence="1" type="primary">rex</name>
    <name type="ordered locus">SaurJH1_2120</name>
</gene>
<reference key="1">
    <citation type="submission" date="2007-06" db="EMBL/GenBank/DDBJ databases">
        <title>Complete sequence of chromosome of Staphylococcus aureus subsp. aureus JH1.</title>
        <authorList>
            <consortium name="US DOE Joint Genome Institute"/>
            <person name="Copeland A."/>
            <person name="Lucas S."/>
            <person name="Lapidus A."/>
            <person name="Barry K."/>
            <person name="Detter J.C."/>
            <person name="Glavina del Rio T."/>
            <person name="Hammon N."/>
            <person name="Israni S."/>
            <person name="Dalin E."/>
            <person name="Tice H."/>
            <person name="Pitluck S."/>
            <person name="Chain P."/>
            <person name="Malfatti S."/>
            <person name="Shin M."/>
            <person name="Vergez L."/>
            <person name="Schmutz J."/>
            <person name="Larimer F."/>
            <person name="Land M."/>
            <person name="Hauser L."/>
            <person name="Kyrpides N."/>
            <person name="Ivanova N."/>
            <person name="Tomasz A."/>
            <person name="Richardson P."/>
        </authorList>
    </citation>
    <scope>NUCLEOTIDE SEQUENCE [LARGE SCALE GENOMIC DNA]</scope>
    <source>
        <strain>JH1</strain>
    </source>
</reference>
<sequence>MSDQVKIPRATLKRLPLYYRFVSSLKSKGIDRVNSKAISDALQIDSATIRRDFSYFGELGKKGYGYNIDSLLDFFKSELSESDMIKIAIVGVGNLGKALLTYNFSIHDDMTITEAFDVKEDVIGQKIGNVIVKDNDELITTLKKEEIDVVILTTPERVAQKVADELVQAGVKGILNFTPGRINTPSDVQVHQIDLGIELQSLLFFMKNYSE</sequence>
<evidence type="ECO:0000255" key="1">
    <source>
        <dbReference type="HAMAP-Rule" id="MF_01131"/>
    </source>
</evidence>
<accession>A6U3D1</accession>